<protein>
    <recommendedName>
        <fullName>Fructose-bisphosphate aldolase A</fullName>
        <ecNumber evidence="3">4.1.2.13</ecNumber>
    </recommendedName>
    <alternativeName>
        <fullName>Aldolase 1</fullName>
    </alternativeName>
    <alternativeName>
        <fullName>Muscle-type aldolase</fullName>
    </alternativeName>
</protein>
<feature type="initiator methionine" description="Removed" evidence="6">
    <location>
        <position position="1"/>
    </location>
</feature>
<feature type="chain" id="PRO_0000216937" description="Fructose-bisphosphate aldolase A">
    <location>
        <begin position="2"/>
        <end position="364"/>
    </location>
</feature>
<feature type="active site" description="Proton acceptor" evidence="2">
    <location>
        <position position="188"/>
    </location>
</feature>
<feature type="active site" description="Schiff-base intermediate with dihydroxyacetone-P" evidence="2">
    <location>
        <position position="230"/>
    </location>
</feature>
<feature type="binding site" evidence="2">
    <location>
        <position position="43"/>
    </location>
    <ligand>
        <name>beta-D-fructose 1,6-bisphosphate</name>
        <dbReference type="ChEBI" id="CHEBI:32966"/>
    </ligand>
</feature>
<feature type="binding site" evidence="2">
    <location>
        <begin position="272"/>
        <end position="274"/>
    </location>
    <ligand>
        <name>beta-D-fructose 1,6-bisphosphate</name>
        <dbReference type="ChEBI" id="CHEBI:32966"/>
    </ligand>
</feature>
<feature type="binding site" evidence="2">
    <location>
        <position position="301"/>
    </location>
    <ligand>
        <name>beta-D-fructose 1,6-bisphosphate</name>
        <dbReference type="ChEBI" id="CHEBI:32966"/>
    </ligand>
</feature>
<feature type="binding site" evidence="2">
    <location>
        <position position="304"/>
    </location>
    <ligand>
        <name>beta-D-fructose 1,6-bisphosphate</name>
        <dbReference type="ChEBI" id="CHEBI:32966"/>
    </ligand>
</feature>
<feature type="site" description="Necessary for preference for fructose 1,6-bisphosphate over fructose 1-phosphate">
    <location>
        <position position="364"/>
    </location>
</feature>
<feature type="modified residue" description="Phosphotyrosine" evidence="4">
    <location>
        <position position="5"/>
    </location>
</feature>
<feature type="modified residue" description="Phosphothreonine" evidence="3">
    <location>
        <position position="9"/>
    </location>
</feature>
<feature type="modified residue" description="Phosphoserine" evidence="3">
    <location>
        <position position="36"/>
    </location>
</feature>
<feature type="modified residue" description="Phosphoserine" evidence="3">
    <location>
        <position position="39"/>
    </location>
</feature>
<feature type="modified residue" description="N6-acetyllysine; alternate" evidence="3">
    <location>
        <position position="42"/>
    </location>
</feature>
<feature type="modified residue" description="Phosphoserine" evidence="3">
    <location>
        <position position="46"/>
    </location>
</feature>
<feature type="modified residue" description="N6-(2-hydroxyisobutyryl)lysine" evidence="3">
    <location>
        <position position="99"/>
    </location>
</feature>
<feature type="modified residue" description="N6-acetyllysine" evidence="3">
    <location>
        <position position="108"/>
    </location>
</feature>
<feature type="modified residue" description="N6-acetyllysine; alternate" evidence="5">
    <location>
        <position position="111"/>
    </location>
</feature>
<feature type="modified residue" description="N6-malonyllysine; alternate" evidence="1">
    <location>
        <position position="111"/>
    </location>
</feature>
<feature type="modified residue" description="Phosphoserine" evidence="4">
    <location>
        <position position="132"/>
    </location>
</feature>
<feature type="modified residue" description="N6-(2-hydroxyisobutyryl)lysine" evidence="3">
    <location>
        <position position="147"/>
    </location>
</feature>
<feature type="modified residue" description="Phosphoserine" evidence="3">
    <location>
        <position position="272"/>
    </location>
</feature>
<feature type="modified residue" description="N6-malonyllysine" evidence="1">
    <location>
        <position position="312"/>
    </location>
</feature>
<feature type="modified residue" description="N6-acetyllysine" evidence="3">
    <location>
        <position position="330"/>
    </location>
</feature>
<feature type="cross-link" description="Glycyl lysine isopeptide (Lys-Gly) (interchain with G-Cter in SUMO1); alternate" evidence="3">
    <location>
        <position position="42"/>
    </location>
</feature>
<feature type="cross-link" description="Glycyl lysine isopeptide (Lys-Gly) (interchain with G-Cter in SUMO2); alternate" evidence="3">
    <location>
        <position position="42"/>
    </location>
</feature>
<feature type="sequence conflict" description="In Ref. 5; CAA27423." evidence="7" ref="5">
    <original>S</original>
    <variation>C</variation>
    <location>
        <position position="281"/>
    </location>
</feature>
<keyword id="KW-0007">Acetylation</keyword>
<keyword id="KW-0963">Cytoplasm</keyword>
<keyword id="KW-0903">Direct protein sequencing</keyword>
<keyword id="KW-0324">Glycolysis</keyword>
<keyword id="KW-0379">Hydroxylation</keyword>
<keyword id="KW-1017">Isopeptide bond</keyword>
<keyword id="KW-0456">Lyase</keyword>
<keyword id="KW-0597">Phosphoprotein</keyword>
<keyword id="KW-1185">Reference proteome</keyword>
<keyword id="KW-0704">Schiff base</keyword>
<keyword id="KW-0832">Ubl conjugation</keyword>
<name>ALDOA_MOUSE</name>
<accession>P05064</accession>
<sequence length="364" mass="39356">MPHPYPALTPEQKKELSDIAHRIVAPGKGILAADESTGSIAKRLQSIGTENTEENRRFYRQLLLTADDRVNPCIGGVILFHETLYQKADDGRPFPQVIKSKGGVVGIKVDKGVVPLAGTNGETTTQGLDGLSERCAQYKKDGADFAKWRCVLKIGEHTPSALAIMENANVLARYASICQQNGIVPIVEPEILPDGDHDLKRCQYVTEKVLAAVYKALSDHHVYLEGTLLKPNMVTPGHACTQKFSNEEIAMATVTALRRTVPPAVTGVTFLSGGQSEEEASINLNAINKCPLLKPWALTFSYGRALQASALKAWGGKKENLKAAQEEYIKRALANSLACQGKYTPSGQSGAAASESLFISNHAY</sequence>
<proteinExistence type="evidence at protein level"/>
<dbReference type="EC" id="4.1.2.13" evidence="3"/>
<dbReference type="EMBL" id="X03797">
    <property type="protein sequence ID" value="CAA27423.1"/>
    <property type="molecule type" value="mRNA"/>
</dbReference>
<dbReference type="EMBL" id="BC043026">
    <property type="protein sequence ID" value="AAH43026.1"/>
    <property type="molecule type" value="mRNA"/>
</dbReference>
<dbReference type="EMBL" id="BC050896">
    <property type="protein sequence ID" value="AAH50896.1"/>
    <property type="molecule type" value="mRNA"/>
</dbReference>
<dbReference type="EMBL" id="J05517">
    <property type="protein sequence ID" value="AAA37210.2"/>
    <property type="molecule type" value="Genomic_DNA"/>
</dbReference>
<dbReference type="EMBL" id="Y00516">
    <property type="protein sequence ID" value="CAA68571.1"/>
    <property type="molecule type" value="mRNA"/>
</dbReference>
<dbReference type="CCDS" id="CCDS21845.1"/>
<dbReference type="PIR" id="S06323">
    <property type="entry name" value="ADMSA"/>
</dbReference>
<dbReference type="RefSeq" id="NP_001170779.1">
    <property type="nucleotide sequence ID" value="NM_001177308.2"/>
</dbReference>
<dbReference type="RefSeq" id="NP_001398833.1">
    <property type="nucleotide sequence ID" value="NM_001411904.1"/>
</dbReference>
<dbReference type="RefSeq" id="NP_031464.1">
    <property type="nucleotide sequence ID" value="NM_007438.5"/>
</dbReference>
<dbReference type="RefSeq" id="XP_006507273.1">
    <property type="nucleotide sequence ID" value="XM_006507210.2"/>
</dbReference>
<dbReference type="RefSeq" id="XP_006507274.1">
    <property type="nucleotide sequence ID" value="XM_006507211.3"/>
</dbReference>
<dbReference type="SMR" id="P05064"/>
<dbReference type="BioGRID" id="198067">
    <property type="interactions" value="39"/>
</dbReference>
<dbReference type="FunCoup" id="P05064">
    <property type="interactions" value="1238"/>
</dbReference>
<dbReference type="IntAct" id="P05064">
    <property type="interactions" value="22"/>
</dbReference>
<dbReference type="MINT" id="P05064"/>
<dbReference type="STRING" id="10090.ENSMUSP00000084846"/>
<dbReference type="MoonProt" id="P05064"/>
<dbReference type="GlyGen" id="P05064">
    <property type="glycosylation" value="3 sites, 1 O-linked glycan (2 sites)"/>
</dbReference>
<dbReference type="iPTMnet" id="P05064"/>
<dbReference type="MetOSite" id="P05064"/>
<dbReference type="PhosphoSitePlus" id="P05064"/>
<dbReference type="SwissPalm" id="P05064"/>
<dbReference type="REPRODUCTION-2DPAGE" id="IPI00221402"/>
<dbReference type="REPRODUCTION-2DPAGE" id="P05064"/>
<dbReference type="jPOST" id="P05064"/>
<dbReference type="PaxDb" id="10090-ENSMUSP00000084846"/>
<dbReference type="PeptideAtlas" id="P05064"/>
<dbReference type="ProteomicsDB" id="296171"/>
<dbReference type="Pumba" id="P05064"/>
<dbReference type="TopDownProteomics" id="P05064"/>
<dbReference type="DNASU" id="11674"/>
<dbReference type="Ensembl" id="ENSMUST00000032934.12">
    <property type="protein sequence ID" value="ENSMUSP00000032934.6"/>
    <property type="gene ID" value="ENSMUSG00000030695.17"/>
</dbReference>
<dbReference type="Ensembl" id="ENSMUST00000106348.8">
    <property type="protein sequence ID" value="ENSMUSP00000101955.2"/>
    <property type="gene ID" value="ENSMUSG00000030695.17"/>
</dbReference>
<dbReference type="GeneID" id="11674"/>
<dbReference type="KEGG" id="mmu:11674"/>
<dbReference type="UCSC" id="uc009jsu.2">
    <property type="organism name" value="mouse"/>
</dbReference>
<dbReference type="AGR" id="MGI:87994"/>
<dbReference type="CTD" id="226"/>
<dbReference type="MGI" id="MGI:87994">
    <property type="gene designation" value="Aldoa"/>
</dbReference>
<dbReference type="VEuPathDB" id="HostDB:ENSMUSG00000030695"/>
<dbReference type="eggNOG" id="KOG1557">
    <property type="taxonomic scope" value="Eukaryota"/>
</dbReference>
<dbReference type="GeneTree" id="ENSGT00950000182987"/>
<dbReference type="HOGENOM" id="CLU_031243_0_0_1"/>
<dbReference type="InParanoid" id="P05064"/>
<dbReference type="OMA" id="WRAVITI"/>
<dbReference type="OrthoDB" id="36455at2759"/>
<dbReference type="PhylomeDB" id="P05064"/>
<dbReference type="Reactome" id="R-MMU-114608">
    <property type="pathway name" value="Platelet degranulation"/>
</dbReference>
<dbReference type="Reactome" id="R-MMU-6798695">
    <property type="pathway name" value="Neutrophil degranulation"/>
</dbReference>
<dbReference type="Reactome" id="R-MMU-70171">
    <property type="pathway name" value="Glycolysis"/>
</dbReference>
<dbReference type="Reactome" id="R-MMU-70263">
    <property type="pathway name" value="Gluconeogenesis"/>
</dbReference>
<dbReference type="SABIO-RK" id="P05064"/>
<dbReference type="UniPathway" id="UPA00109">
    <property type="reaction ID" value="UER00183"/>
</dbReference>
<dbReference type="BioGRID-ORCS" id="11674">
    <property type="hits" value="34 hits in 80 CRISPR screens"/>
</dbReference>
<dbReference type="ChiTaRS" id="Aldoa">
    <property type="organism name" value="mouse"/>
</dbReference>
<dbReference type="PRO" id="PR:P05064"/>
<dbReference type="Proteomes" id="UP000000589">
    <property type="component" value="Chromosome 7"/>
</dbReference>
<dbReference type="RNAct" id="P05064">
    <property type="molecule type" value="protein"/>
</dbReference>
<dbReference type="Bgee" id="ENSMUSG00000030695">
    <property type="expression patterns" value="Expressed in gastrocnemius medialis and 279 other cell types or tissues"/>
</dbReference>
<dbReference type="ExpressionAtlas" id="P05064">
    <property type="expression patterns" value="baseline and differential"/>
</dbReference>
<dbReference type="GO" id="GO:0005737">
    <property type="term" value="C:cytoplasm"/>
    <property type="evidence" value="ECO:0000314"/>
    <property type="project" value="MGI"/>
</dbReference>
<dbReference type="GO" id="GO:0005829">
    <property type="term" value="C:cytosol"/>
    <property type="evidence" value="ECO:0000314"/>
    <property type="project" value="MGI"/>
</dbReference>
<dbReference type="GO" id="GO:0005615">
    <property type="term" value="C:extracellular space"/>
    <property type="evidence" value="ECO:0007005"/>
    <property type="project" value="BHF-UCL"/>
</dbReference>
<dbReference type="GO" id="GO:0031430">
    <property type="term" value="C:M band"/>
    <property type="evidence" value="ECO:0007669"/>
    <property type="project" value="UniProtKB-SubCell"/>
</dbReference>
<dbReference type="GO" id="GO:0016020">
    <property type="term" value="C:membrane"/>
    <property type="evidence" value="ECO:0000314"/>
    <property type="project" value="UniProtKB"/>
</dbReference>
<dbReference type="GO" id="GO:0043209">
    <property type="term" value="C:myelin sheath"/>
    <property type="evidence" value="ECO:0007005"/>
    <property type="project" value="UniProtKB"/>
</dbReference>
<dbReference type="GO" id="GO:0005886">
    <property type="term" value="C:plasma membrane"/>
    <property type="evidence" value="ECO:0000314"/>
    <property type="project" value="MGI"/>
</dbReference>
<dbReference type="GO" id="GO:0032991">
    <property type="term" value="C:protein-containing complex"/>
    <property type="evidence" value="ECO:0000314"/>
    <property type="project" value="UniProtKB"/>
</dbReference>
<dbReference type="GO" id="GO:0035686">
    <property type="term" value="C:sperm fibrous sheath"/>
    <property type="evidence" value="ECO:0000314"/>
    <property type="project" value="MGI"/>
</dbReference>
<dbReference type="GO" id="GO:0030018">
    <property type="term" value="C:Z disc"/>
    <property type="evidence" value="ECO:0000314"/>
    <property type="project" value="UniProtKB"/>
</dbReference>
<dbReference type="GO" id="GO:0004332">
    <property type="term" value="F:fructose-bisphosphate aldolase activity"/>
    <property type="evidence" value="ECO:0000314"/>
    <property type="project" value="MGI"/>
</dbReference>
<dbReference type="GO" id="GO:0002020">
    <property type="term" value="F:protease binding"/>
    <property type="evidence" value="ECO:0000353"/>
    <property type="project" value="UniProtKB"/>
</dbReference>
<dbReference type="GO" id="GO:0061621">
    <property type="term" value="P:canonical glycolysis"/>
    <property type="evidence" value="ECO:0000314"/>
    <property type="project" value="MGI"/>
</dbReference>
<dbReference type="GO" id="GO:0006096">
    <property type="term" value="P:glycolytic process"/>
    <property type="evidence" value="ECO:0000250"/>
    <property type="project" value="UniProtKB"/>
</dbReference>
<dbReference type="GO" id="GO:0061615">
    <property type="term" value="P:glycolytic process through fructose-6-phosphate"/>
    <property type="evidence" value="ECO:0000305"/>
    <property type="project" value="MGI"/>
</dbReference>
<dbReference type="GO" id="GO:0030335">
    <property type="term" value="P:positive regulation of cell migration"/>
    <property type="evidence" value="ECO:0000315"/>
    <property type="project" value="CAFA"/>
</dbReference>
<dbReference type="GO" id="GO:0051289">
    <property type="term" value="P:protein homotetramerization"/>
    <property type="evidence" value="ECO:0000250"/>
    <property type="project" value="UniProtKB"/>
</dbReference>
<dbReference type="CDD" id="cd00948">
    <property type="entry name" value="FBP_aldolase_I_a"/>
    <property type="match status" value="1"/>
</dbReference>
<dbReference type="FunFam" id="3.20.20.70:FF:000021">
    <property type="entry name" value="Fructose-bisphosphate aldolase"/>
    <property type="match status" value="1"/>
</dbReference>
<dbReference type="Gene3D" id="3.20.20.70">
    <property type="entry name" value="Aldolase class I"/>
    <property type="match status" value="1"/>
</dbReference>
<dbReference type="InterPro" id="IPR029768">
    <property type="entry name" value="Aldolase_I_AS"/>
</dbReference>
<dbReference type="InterPro" id="IPR013785">
    <property type="entry name" value="Aldolase_TIM"/>
</dbReference>
<dbReference type="InterPro" id="IPR000741">
    <property type="entry name" value="FBA_I"/>
</dbReference>
<dbReference type="NCBIfam" id="NF033379">
    <property type="entry name" value="FrucBisAld_I"/>
    <property type="match status" value="1"/>
</dbReference>
<dbReference type="PANTHER" id="PTHR11627">
    <property type="entry name" value="FRUCTOSE-BISPHOSPHATE ALDOLASE"/>
    <property type="match status" value="1"/>
</dbReference>
<dbReference type="Pfam" id="PF00274">
    <property type="entry name" value="Glycolytic"/>
    <property type="match status" value="1"/>
</dbReference>
<dbReference type="SUPFAM" id="SSF51569">
    <property type="entry name" value="Aldolase"/>
    <property type="match status" value="1"/>
</dbReference>
<dbReference type="PROSITE" id="PS00158">
    <property type="entry name" value="ALDOLASE_CLASS_I"/>
    <property type="match status" value="1"/>
</dbReference>
<reference key="1">
    <citation type="journal article" date="1987" name="Nucleic Acids Res.">
        <title>Sequence of a mouse brain aldolase A cDNA.</title>
        <authorList>
            <person name="Mestek A."/>
            <person name="Stauffer J."/>
            <person name="Tolan D.R."/>
            <person name="Ciejek-Baez E."/>
        </authorList>
    </citation>
    <scope>NUCLEOTIDE SEQUENCE [MRNA]</scope>
    <source>
        <strain>129</strain>
    </source>
</reference>
<reference key="2">
    <citation type="journal article" date="2004" name="Genome Res.">
        <title>The status, quality, and expansion of the NIH full-length cDNA project: the Mammalian Gene Collection (MGC).</title>
        <authorList>
            <consortium name="The MGC Project Team"/>
        </authorList>
    </citation>
    <scope>NUCLEOTIDE SEQUENCE [LARGE SCALE MRNA]</scope>
    <source>
        <strain>C57BL/6J</strain>
        <tissue>Brain</tissue>
    </source>
</reference>
<reference key="3">
    <citation type="journal article" date="1990" name="J. Biol. Chem.">
        <title>Nonconservative utilization of aldolase A alternative promoters.</title>
        <authorList>
            <person name="Stauffer J.K."/>
            <person name="Colbert M.C."/>
            <person name="Ciejek-Baez E."/>
        </authorList>
    </citation>
    <scope>NUCLEOTIDE SEQUENCE [GENOMIC DNA] OF 1-266 AND 295-364</scope>
</reference>
<reference key="4">
    <citation type="submission" date="2009-01" db="UniProtKB">
        <authorList>
            <person name="Lubec G."/>
            <person name="Kang S.U."/>
            <person name="Klug S."/>
            <person name="Yang J.W."/>
            <person name="Zigmond M."/>
            <person name="Sunyer B."/>
            <person name="Chen W.-Q."/>
        </authorList>
    </citation>
    <scope>PROTEIN SEQUENCE OF 2-22; 29-57; 61-109; 112-134; 154-258; 260-312 AND 323-364</scope>
    <scope>IDENTIFICATION BY MASS SPECTROMETRY</scope>
    <source>
        <strain>C57BL/6J</strain>
        <strain>OF1</strain>
        <tissue>Brain</tissue>
        <tissue>Hippocampus</tissue>
    </source>
</reference>
<reference key="5">
    <citation type="journal article" date="1986" name="Eur. J. Biochem.">
        <title>Structure and expression of mouse aldolase genes. Brain-specific aldolase C amino acid sequence is closely related to aldolase A.</title>
        <authorList>
            <person name="Paolella G."/>
            <person name="Buono P."/>
            <person name="Mancini P."/>
            <person name="Izzo P."/>
            <person name="Salvatore F."/>
        </authorList>
    </citation>
    <scope>NUCLEOTIDE SEQUENCE [MRNA] OF 99-355</scope>
</reference>
<reference key="6">
    <citation type="journal article" date="2010" name="Cell">
        <title>A tissue-specific atlas of mouse protein phosphorylation and expression.</title>
        <authorList>
            <person name="Huttlin E.L."/>
            <person name="Jedrychowski M.P."/>
            <person name="Elias J.E."/>
            <person name="Goswami T."/>
            <person name="Rad R."/>
            <person name="Beausoleil S.A."/>
            <person name="Villen J."/>
            <person name="Haas W."/>
            <person name="Sowa M.E."/>
            <person name="Gygi S.P."/>
        </authorList>
    </citation>
    <scope>IDENTIFICATION BY MASS SPECTROMETRY [LARGE SCALE ANALYSIS]</scope>
    <source>
        <tissue>Brain</tissue>
        <tissue>Brown adipose tissue</tissue>
        <tissue>Heart</tissue>
        <tissue>Kidney</tissue>
        <tissue>Liver</tissue>
        <tissue>Lung</tissue>
        <tissue>Pancreas</tissue>
        <tissue>Spleen</tissue>
        <tissue>Testis</tissue>
    </source>
</reference>
<evidence type="ECO:0000250" key="1"/>
<evidence type="ECO:0000250" key="2">
    <source>
        <dbReference type="UniProtKB" id="P00883"/>
    </source>
</evidence>
<evidence type="ECO:0000250" key="3">
    <source>
        <dbReference type="UniProtKB" id="P04075"/>
    </source>
</evidence>
<evidence type="ECO:0000250" key="4">
    <source>
        <dbReference type="UniProtKB" id="P05065"/>
    </source>
</evidence>
<evidence type="ECO:0000250" key="5">
    <source>
        <dbReference type="UniProtKB" id="P09972"/>
    </source>
</evidence>
<evidence type="ECO:0000269" key="6">
    <source ref="4"/>
</evidence>
<evidence type="ECO:0000305" key="7"/>
<gene>
    <name type="primary">Aldoa</name>
    <name type="synonym">Aldo1</name>
</gene>
<comment type="function">
    <text evidence="1 3">Catalyzes the reversible conversion of beta-D-fructose 1,6-bisphosphate (FBP) into two triose phosphate and plays a key role in glycolysis and gluconeogenesis (By similarity). In addition, may also function as scaffolding protein (By similarity).</text>
</comment>
<comment type="catalytic activity">
    <reaction evidence="3">
        <text>beta-D-fructose 1,6-bisphosphate = D-glyceraldehyde 3-phosphate + dihydroxyacetone phosphate</text>
        <dbReference type="Rhea" id="RHEA:14729"/>
        <dbReference type="ChEBI" id="CHEBI:32966"/>
        <dbReference type="ChEBI" id="CHEBI:57642"/>
        <dbReference type="ChEBI" id="CHEBI:59776"/>
        <dbReference type="EC" id="4.1.2.13"/>
    </reaction>
    <physiologicalReaction direction="left-to-right" evidence="3">
        <dbReference type="Rhea" id="RHEA:14730"/>
    </physiologicalReaction>
</comment>
<comment type="pathway">
    <text>Carbohydrate degradation; glycolysis; D-glyceraldehyde 3-phosphate and glycerone phosphate from D-glucose: step 4/4.</text>
</comment>
<comment type="subunit">
    <text evidence="1">Homotetramer. Interacts with SNX9 and WAS. Interacts with FBP2; the interaction blocks FBP2 inhibition by physiological concentrations of AMP and reduces inhibition by Ca(2+) (By similarity).</text>
</comment>
<comment type="subcellular location">
    <subcellularLocation>
        <location evidence="2">Cytoplasm</location>
        <location evidence="2">Myofibril</location>
        <location evidence="2">Sarcomere</location>
        <location evidence="2">I band</location>
    </subcellularLocation>
    <subcellularLocation>
        <location evidence="2">Cytoplasm</location>
        <location evidence="2">Myofibril</location>
        <location evidence="2">Sarcomere</location>
        <location evidence="2">M line</location>
    </subcellularLocation>
    <text evidence="2">In skeletal muscle, accumulates around the M line and within the I band, colocalizing with FBP2 on both sides of the Z line in the absence of Ca(2+).</text>
</comment>
<comment type="miscellaneous">
    <text>In vertebrates, three forms of this ubiquitous glycolytic enzyme are found, aldolase A in muscle, aldolase B in liver and aldolase C in brain.</text>
</comment>
<comment type="similarity">
    <text evidence="7">Belongs to the class I fructose-bisphosphate aldolase family.</text>
</comment>
<organism>
    <name type="scientific">Mus musculus</name>
    <name type="common">Mouse</name>
    <dbReference type="NCBI Taxonomy" id="10090"/>
    <lineage>
        <taxon>Eukaryota</taxon>
        <taxon>Metazoa</taxon>
        <taxon>Chordata</taxon>
        <taxon>Craniata</taxon>
        <taxon>Vertebrata</taxon>
        <taxon>Euteleostomi</taxon>
        <taxon>Mammalia</taxon>
        <taxon>Eutheria</taxon>
        <taxon>Euarchontoglires</taxon>
        <taxon>Glires</taxon>
        <taxon>Rodentia</taxon>
        <taxon>Myomorpha</taxon>
        <taxon>Muroidea</taxon>
        <taxon>Muridae</taxon>
        <taxon>Murinae</taxon>
        <taxon>Mus</taxon>
        <taxon>Mus</taxon>
    </lineage>
</organism>